<evidence type="ECO:0000250" key="1">
    <source>
        <dbReference type="UniProtKB" id="Q9H9J2"/>
    </source>
</evidence>
<evidence type="ECO:0000255" key="2"/>
<evidence type="ECO:0000305" key="3"/>
<evidence type="ECO:0000312" key="4">
    <source>
        <dbReference type="WormBase" id="F02A9.4"/>
    </source>
</evidence>
<sequence>MFRHVAQNLGSRNTSIQSYRLLRTRWERGYLKDLYHRRQILGADPAISRSSYPNWDYDSELYAFGHRIGAPEISEDQYIKALTNESFFQRADVEENVESAQPGAEVGTEHNAELVKRGEQNLSIWLKRYLRFHLAKAPEELIEAIDSHLLDDECLAGIASHLGIDHLVRTKEFPISQESSADAFRALAGVFSDEKVKNLVIDFIVPQLVDIDFADIYPLADPLAVVTDLLKSNGVTEIEPRVLRSAGENSAEPIYVVAIYADKLKNVGQSAGESLAIAVDMAAREALLRLWDITSEKVLFFGDRAANVPLERYSQPNFSLSQKCSPGTNTNIIDHSQPVESPDNLIEAVLRYRNVVDAEVGKSYTKRLRHKFSRGSLAKRSFRYLVKPKPYTVA</sequence>
<protein>
    <recommendedName>
        <fullName evidence="3">Large ribosomal subunit protein mL44</fullName>
    </recommendedName>
    <alternativeName>
        <fullName evidence="4">Mitochondrial large ribosomal subunit protein mrpl-44</fullName>
    </alternativeName>
    <alternativeName>
        <fullName evidence="3">Ribosomal protein L44, mitochondrial</fullName>
    </alternativeName>
</protein>
<comment type="function">
    <text evidence="1">Component of the mitochondrial ribosome. May have a function in the assembly/stability of nascent mitochondrial polypeptides exiting the ribosome.</text>
</comment>
<comment type="subunit">
    <text evidence="1">Component of the mitochondrial large ribosomal subunit (mt-LSU).</text>
</comment>
<comment type="subcellular location">
    <subcellularLocation>
        <location evidence="2">Mitochondrion</location>
    </subcellularLocation>
</comment>
<comment type="similarity">
    <text evidence="3">Belongs to the ribonuclease III family. Mitochondrion-specific ribosomal protein mL44 subfamily.</text>
</comment>
<dbReference type="EMBL" id="BX284603">
    <property type="protein sequence ID" value="CAA79619.2"/>
    <property type="molecule type" value="Genomic_DNA"/>
</dbReference>
<dbReference type="PIR" id="D88547">
    <property type="entry name" value="D88547"/>
</dbReference>
<dbReference type="PIR" id="S28312">
    <property type="entry name" value="S28312"/>
</dbReference>
<dbReference type="RefSeq" id="NP_499012.2">
    <property type="nucleotide sequence ID" value="NM_066611.6"/>
</dbReference>
<dbReference type="SMR" id="P34384"/>
<dbReference type="BioGRID" id="41484">
    <property type="interactions" value="8"/>
</dbReference>
<dbReference type="FunCoup" id="P34384">
    <property type="interactions" value="2451"/>
</dbReference>
<dbReference type="STRING" id="6239.F02A9.4.1"/>
<dbReference type="PeptideAtlas" id="P34384"/>
<dbReference type="EnsemblMetazoa" id="F02A9.4.1">
    <property type="protein sequence ID" value="F02A9.4.1"/>
    <property type="gene ID" value="WBGene00008514"/>
</dbReference>
<dbReference type="GeneID" id="176285"/>
<dbReference type="KEGG" id="cel:CELE_F02A9.4"/>
<dbReference type="UCSC" id="F02A9.4b">
    <property type="organism name" value="c. elegans"/>
</dbReference>
<dbReference type="AGR" id="WB:WBGene00008514"/>
<dbReference type="CTD" id="176285"/>
<dbReference type="WormBase" id="F02A9.4">
    <property type="protein sequence ID" value="CE33612"/>
    <property type="gene ID" value="WBGene00008514"/>
    <property type="gene designation" value="mrpl-44"/>
</dbReference>
<dbReference type="GeneTree" id="ENSGT00390000016956"/>
<dbReference type="HOGENOM" id="CLU_058895_1_0_1"/>
<dbReference type="InParanoid" id="P34384"/>
<dbReference type="OrthoDB" id="444135at2759"/>
<dbReference type="Reactome" id="R-CEL-5389840">
    <property type="pathway name" value="Mitochondrial translation elongation"/>
</dbReference>
<dbReference type="Reactome" id="R-CEL-5419276">
    <property type="pathway name" value="Mitochondrial translation termination"/>
</dbReference>
<dbReference type="PRO" id="PR:P34384"/>
<dbReference type="Proteomes" id="UP000001940">
    <property type="component" value="Chromosome III"/>
</dbReference>
<dbReference type="Bgee" id="WBGene00008514">
    <property type="expression patterns" value="Expressed in pharyngeal muscle cell (C elegans) and 4 other cell types or tissues"/>
</dbReference>
<dbReference type="GO" id="GO:0005762">
    <property type="term" value="C:mitochondrial large ribosomal subunit"/>
    <property type="evidence" value="ECO:0000318"/>
    <property type="project" value="GO_Central"/>
</dbReference>
<dbReference type="GO" id="GO:0005634">
    <property type="term" value="C:nucleus"/>
    <property type="evidence" value="ECO:0000318"/>
    <property type="project" value="GO_Central"/>
</dbReference>
<dbReference type="GO" id="GO:0003725">
    <property type="term" value="F:double-stranded RNA binding"/>
    <property type="evidence" value="ECO:0007669"/>
    <property type="project" value="InterPro"/>
</dbReference>
<dbReference type="GO" id="GO:0004525">
    <property type="term" value="F:ribonuclease III activity"/>
    <property type="evidence" value="ECO:0007669"/>
    <property type="project" value="InterPro"/>
</dbReference>
<dbReference type="GO" id="GO:0070125">
    <property type="term" value="P:mitochondrial translational elongation"/>
    <property type="evidence" value="ECO:0000318"/>
    <property type="project" value="GO_Central"/>
</dbReference>
<dbReference type="GO" id="GO:0006396">
    <property type="term" value="P:RNA processing"/>
    <property type="evidence" value="ECO:0007669"/>
    <property type="project" value="InterPro"/>
</dbReference>
<dbReference type="CDD" id="cd19874">
    <property type="entry name" value="DSRM_MRPL44"/>
    <property type="match status" value="1"/>
</dbReference>
<dbReference type="FunFam" id="3.30.160.20:FF:000037">
    <property type="entry name" value="39S ribosomal protein L44, mitochondrial"/>
    <property type="match status" value="1"/>
</dbReference>
<dbReference type="Gene3D" id="3.30.160.20">
    <property type="match status" value="1"/>
</dbReference>
<dbReference type="Gene3D" id="1.10.1520.10">
    <property type="entry name" value="Ribonuclease III domain"/>
    <property type="match status" value="1"/>
</dbReference>
<dbReference type="InterPro" id="IPR044444">
    <property type="entry name" value="Ribosomal_mL44_DSRM_metazoa"/>
</dbReference>
<dbReference type="InterPro" id="IPR055189">
    <property type="entry name" value="RM44_endonuclase"/>
</dbReference>
<dbReference type="InterPro" id="IPR036389">
    <property type="entry name" value="RNase_III_sf"/>
</dbReference>
<dbReference type="Pfam" id="PF22892">
    <property type="entry name" value="DSRM_MRPL44"/>
    <property type="match status" value="1"/>
</dbReference>
<dbReference type="Pfam" id="PF22935">
    <property type="entry name" value="RM44_endonuclase"/>
    <property type="match status" value="1"/>
</dbReference>
<dbReference type="SUPFAM" id="SSF69065">
    <property type="entry name" value="RNase III domain-like"/>
    <property type="match status" value="1"/>
</dbReference>
<accession>P34384</accession>
<gene>
    <name evidence="4" type="primary">mrpl-44</name>
    <name evidence="4" type="ORF">F02A9.4</name>
</gene>
<name>RM44_CAEEL</name>
<organism>
    <name type="scientific">Caenorhabditis elegans</name>
    <dbReference type="NCBI Taxonomy" id="6239"/>
    <lineage>
        <taxon>Eukaryota</taxon>
        <taxon>Metazoa</taxon>
        <taxon>Ecdysozoa</taxon>
        <taxon>Nematoda</taxon>
        <taxon>Chromadorea</taxon>
        <taxon>Rhabditida</taxon>
        <taxon>Rhabditina</taxon>
        <taxon>Rhabditomorpha</taxon>
        <taxon>Rhabditoidea</taxon>
        <taxon>Rhabditidae</taxon>
        <taxon>Peloderinae</taxon>
        <taxon>Caenorhabditis</taxon>
    </lineage>
</organism>
<feature type="transit peptide" description="Mitochondrion" evidence="2">
    <location>
        <begin position="1"/>
        <end position="21"/>
    </location>
</feature>
<feature type="chain" id="PRO_0000065276" description="Large ribosomal subunit protein mL44">
    <location>
        <begin position="22"/>
        <end position="394"/>
    </location>
</feature>
<reference key="1">
    <citation type="journal article" date="1994" name="Nature">
        <title>2.2 Mb of contiguous nucleotide sequence from chromosome III of C. elegans.</title>
        <authorList>
            <person name="Wilson R."/>
            <person name="Ainscough R."/>
            <person name="Anderson K."/>
            <person name="Baynes C."/>
            <person name="Berks M."/>
            <person name="Bonfield J."/>
            <person name="Burton J."/>
            <person name="Connell M."/>
            <person name="Copsey T."/>
            <person name="Cooper J."/>
            <person name="Coulson A."/>
            <person name="Craxton M."/>
            <person name="Dear S."/>
            <person name="Du Z."/>
            <person name="Durbin R."/>
            <person name="Favello A."/>
            <person name="Fraser A."/>
            <person name="Fulton L."/>
            <person name="Gardner A."/>
            <person name="Green P."/>
            <person name="Hawkins T."/>
            <person name="Hillier L."/>
            <person name="Jier M."/>
            <person name="Johnston L."/>
            <person name="Jones M."/>
            <person name="Kershaw J."/>
            <person name="Kirsten J."/>
            <person name="Laisster N."/>
            <person name="Latreille P."/>
            <person name="Lightning J."/>
            <person name="Lloyd C."/>
            <person name="Mortimore B."/>
            <person name="O'Callaghan M."/>
            <person name="Parsons J."/>
            <person name="Percy C."/>
            <person name="Rifken L."/>
            <person name="Roopra A."/>
            <person name="Saunders D."/>
            <person name="Shownkeen R."/>
            <person name="Sims M."/>
            <person name="Smaldon N."/>
            <person name="Smith A."/>
            <person name="Smith M."/>
            <person name="Sonnhammer E."/>
            <person name="Staden R."/>
            <person name="Sulston J."/>
            <person name="Thierry-Mieg J."/>
            <person name="Thomas K."/>
            <person name="Vaudin M."/>
            <person name="Vaughan K."/>
            <person name="Waterston R."/>
            <person name="Watson A."/>
            <person name="Weinstock L."/>
            <person name="Wilkinson-Sproat J."/>
            <person name="Wohldman P."/>
        </authorList>
    </citation>
    <scope>NUCLEOTIDE SEQUENCE [LARGE SCALE GENOMIC DNA]</scope>
    <source>
        <strain>Bristol N2</strain>
    </source>
</reference>
<reference key="2">
    <citation type="journal article" date="1998" name="Science">
        <title>Genome sequence of the nematode C. elegans: a platform for investigating biology.</title>
        <authorList>
            <consortium name="The C. elegans sequencing consortium"/>
        </authorList>
    </citation>
    <scope>NUCLEOTIDE SEQUENCE [LARGE SCALE GENOMIC DNA]</scope>
    <source>
        <strain>Bristol N2</strain>
    </source>
</reference>
<proteinExistence type="inferred from homology"/>
<keyword id="KW-0496">Mitochondrion</keyword>
<keyword id="KW-1185">Reference proteome</keyword>
<keyword id="KW-0687">Ribonucleoprotein</keyword>
<keyword id="KW-0689">Ribosomal protein</keyword>
<keyword id="KW-0809">Transit peptide</keyword>